<evidence type="ECO:0000255" key="1">
    <source>
        <dbReference type="HAMAP-Rule" id="MF_00338"/>
    </source>
</evidence>
<reference key="1">
    <citation type="journal article" date="2003" name="Science">
        <title>A genomic view of the human-Bacteroides thetaiotaomicron symbiosis.</title>
        <authorList>
            <person name="Xu J."/>
            <person name="Bjursell M.K."/>
            <person name="Himrod J."/>
            <person name="Deng S."/>
            <person name="Carmichael L.K."/>
            <person name="Chiang H.C."/>
            <person name="Hooper L.V."/>
            <person name="Gordon J.I."/>
        </authorList>
    </citation>
    <scope>NUCLEOTIDE SEQUENCE [LARGE SCALE GENOMIC DNA]</scope>
    <source>
        <strain>ATCC 29148 / DSM 2079 / JCM 5827 / CCUG 10774 / NCTC 10582 / VPI-5482 / E50</strain>
    </source>
</reference>
<feature type="chain" id="PRO_0000138460" description="UPF0145 protein BT_3410">
    <location>
        <begin position="1"/>
        <end position="107"/>
    </location>
</feature>
<gene>
    <name type="ordered locus">BT_3410</name>
</gene>
<keyword id="KW-1185">Reference proteome</keyword>
<accession>Q8A295</accession>
<protein>
    <recommendedName>
        <fullName evidence="1">UPF0145 protein BT_3410</fullName>
    </recommendedName>
</protein>
<name>Y3410_BACTN</name>
<sequence length="107" mass="11287">MLVTTTPIIEGKRIVKYYGIVSGETIIGANVFRDLFASIRDIVGGRSGAYEEVLRMAKDTALQEMQAQAAKLGANAVIGVDLDYETVGGSGSMLMVTANGTAVTIED</sequence>
<comment type="similarity">
    <text evidence="1">Belongs to the UPF0145 family.</text>
</comment>
<proteinExistence type="inferred from homology"/>
<dbReference type="EMBL" id="AE015928">
    <property type="protein sequence ID" value="AAO78516.1"/>
    <property type="molecule type" value="Genomic_DNA"/>
</dbReference>
<dbReference type="RefSeq" id="NP_812322.1">
    <property type="nucleotide sequence ID" value="NC_004663.1"/>
</dbReference>
<dbReference type="RefSeq" id="WP_008767610.1">
    <property type="nucleotide sequence ID" value="NZ_UYXG01000003.1"/>
</dbReference>
<dbReference type="SMR" id="Q8A295"/>
<dbReference type="FunCoup" id="Q8A295">
    <property type="interactions" value="119"/>
</dbReference>
<dbReference type="STRING" id="226186.BT_3410"/>
<dbReference type="PaxDb" id="226186-BT_3410"/>
<dbReference type="EnsemblBacteria" id="AAO78516">
    <property type="protein sequence ID" value="AAO78516"/>
    <property type="gene ID" value="BT_3410"/>
</dbReference>
<dbReference type="KEGG" id="bth:BT_3410"/>
<dbReference type="PATRIC" id="fig|226186.12.peg.3478"/>
<dbReference type="eggNOG" id="COG0393">
    <property type="taxonomic scope" value="Bacteria"/>
</dbReference>
<dbReference type="HOGENOM" id="CLU_117144_3_2_10"/>
<dbReference type="InParanoid" id="Q8A295"/>
<dbReference type="OrthoDB" id="9796448at2"/>
<dbReference type="Proteomes" id="UP000001414">
    <property type="component" value="Chromosome"/>
</dbReference>
<dbReference type="Gene3D" id="3.30.110.70">
    <property type="entry name" value="Hypothetical protein apc22750. Chain B"/>
    <property type="match status" value="1"/>
</dbReference>
<dbReference type="HAMAP" id="MF_00338">
    <property type="entry name" value="UPF0145"/>
    <property type="match status" value="1"/>
</dbReference>
<dbReference type="InterPro" id="IPR035439">
    <property type="entry name" value="UPF0145_dom_sf"/>
</dbReference>
<dbReference type="InterPro" id="IPR002765">
    <property type="entry name" value="UPF0145_YbjQ-like"/>
</dbReference>
<dbReference type="NCBIfam" id="NF002776">
    <property type="entry name" value="PRK02877.1"/>
    <property type="match status" value="1"/>
</dbReference>
<dbReference type="PANTHER" id="PTHR34068">
    <property type="entry name" value="UPF0145 PROTEIN YBJQ"/>
    <property type="match status" value="1"/>
</dbReference>
<dbReference type="PANTHER" id="PTHR34068:SF1">
    <property type="entry name" value="UPF0145 PROTEIN YBJQ"/>
    <property type="match status" value="1"/>
</dbReference>
<dbReference type="Pfam" id="PF01906">
    <property type="entry name" value="YbjQ_1"/>
    <property type="match status" value="1"/>
</dbReference>
<dbReference type="SUPFAM" id="SSF117782">
    <property type="entry name" value="YbjQ-like"/>
    <property type="match status" value="1"/>
</dbReference>
<organism>
    <name type="scientific">Bacteroides thetaiotaomicron (strain ATCC 29148 / DSM 2079 / JCM 5827 / CCUG 10774 / NCTC 10582 / VPI-5482 / E50)</name>
    <dbReference type="NCBI Taxonomy" id="226186"/>
    <lineage>
        <taxon>Bacteria</taxon>
        <taxon>Pseudomonadati</taxon>
        <taxon>Bacteroidota</taxon>
        <taxon>Bacteroidia</taxon>
        <taxon>Bacteroidales</taxon>
        <taxon>Bacteroidaceae</taxon>
        <taxon>Bacteroides</taxon>
    </lineage>
</organism>